<protein>
    <recommendedName>
        <fullName evidence="2">D-alanine--D-alanine ligase</fullName>
        <ecNumber evidence="2">6.3.2.4</ecNumber>
    </recommendedName>
    <alternativeName>
        <fullName evidence="2">D-Ala-D-Ala ligase</fullName>
    </alternativeName>
    <alternativeName>
        <fullName evidence="2">D-alanylalanine synthetase</fullName>
    </alternativeName>
</protein>
<proteinExistence type="inferred from homology"/>
<name>DDL_CUPNH</name>
<comment type="function">
    <text evidence="2">Cell wall formation.</text>
</comment>
<comment type="catalytic activity">
    <reaction evidence="2">
        <text>2 D-alanine + ATP = D-alanyl-D-alanine + ADP + phosphate + H(+)</text>
        <dbReference type="Rhea" id="RHEA:11224"/>
        <dbReference type="ChEBI" id="CHEBI:15378"/>
        <dbReference type="ChEBI" id="CHEBI:30616"/>
        <dbReference type="ChEBI" id="CHEBI:43474"/>
        <dbReference type="ChEBI" id="CHEBI:57416"/>
        <dbReference type="ChEBI" id="CHEBI:57822"/>
        <dbReference type="ChEBI" id="CHEBI:456216"/>
        <dbReference type="EC" id="6.3.2.4"/>
    </reaction>
</comment>
<comment type="cofactor">
    <cofactor evidence="1">
        <name>Mg(2+)</name>
        <dbReference type="ChEBI" id="CHEBI:18420"/>
    </cofactor>
    <cofactor evidence="1">
        <name>Mn(2+)</name>
        <dbReference type="ChEBI" id="CHEBI:29035"/>
    </cofactor>
    <text evidence="1">Binds 2 magnesium or manganese ions per subunit.</text>
</comment>
<comment type="pathway">
    <text evidence="2">Cell wall biogenesis; peptidoglycan biosynthesis.</text>
</comment>
<comment type="subcellular location">
    <subcellularLocation>
        <location evidence="2">Cytoplasm</location>
    </subcellularLocation>
</comment>
<comment type="similarity">
    <text evidence="2">Belongs to the D-alanine--D-alanine ligase family.</text>
</comment>
<feature type="chain" id="PRO_0000341158" description="D-alanine--D-alanine ligase">
    <location>
        <begin position="1"/>
        <end position="327"/>
    </location>
</feature>
<feature type="domain" description="ATP-grasp" evidence="2">
    <location>
        <begin position="113"/>
        <end position="312"/>
    </location>
</feature>
<feature type="binding site" evidence="2">
    <location>
        <begin position="139"/>
        <end position="194"/>
    </location>
    <ligand>
        <name>ATP</name>
        <dbReference type="ChEBI" id="CHEBI:30616"/>
    </ligand>
</feature>
<feature type="binding site" evidence="2">
    <location>
        <position position="266"/>
    </location>
    <ligand>
        <name>Mg(2+)</name>
        <dbReference type="ChEBI" id="CHEBI:18420"/>
        <label>1</label>
    </ligand>
</feature>
<feature type="binding site" evidence="2">
    <location>
        <position position="279"/>
    </location>
    <ligand>
        <name>Mg(2+)</name>
        <dbReference type="ChEBI" id="CHEBI:18420"/>
        <label>1</label>
    </ligand>
</feature>
<feature type="binding site" evidence="2">
    <location>
        <position position="279"/>
    </location>
    <ligand>
        <name>Mg(2+)</name>
        <dbReference type="ChEBI" id="CHEBI:18420"/>
        <label>2</label>
    </ligand>
</feature>
<feature type="binding site" evidence="2">
    <location>
        <position position="281"/>
    </location>
    <ligand>
        <name>Mg(2+)</name>
        <dbReference type="ChEBI" id="CHEBI:18420"/>
        <label>2</label>
    </ligand>
</feature>
<sequence length="327" mass="34924">MSFVAHPNIDPKSLGKVGVLLGGRSAEREISLMSGNGVLAALQSRGVDAHGFDPGLQSVAELAAAGFDRVFIALHGRYGEDGTIQGLLEQLGVPYTGSGVLASAMAMDKQATKRLWMTYGLATPRFAMLHADTDFDAVAADLGLPLIVKPAREGSSIGLTKVTAADQMRAAFEKAAALDNDVIAETFIDGAELTCPIVGEGDSAEALPVIRIVAPEANYDYQNKYFTDDTQYLCPSGLDPEVEREVRALAVQSYRVLGCRGWARADLMLRADGKPFLLEMNTSPGMTGHSLVPMAARAVGISYEDFVMQVVAAATLDLHPNEHWKPE</sequence>
<accession>Q0K6M6</accession>
<keyword id="KW-0067">ATP-binding</keyword>
<keyword id="KW-0133">Cell shape</keyword>
<keyword id="KW-0961">Cell wall biogenesis/degradation</keyword>
<keyword id="KW-0963">Cytoplasm</keyword>
<keyword id="KW-0436">Ligase</keyword>
<keyword id="KW-0460">Magnesium</keyword>
<keyword id="KW-0464">Manganese</keyword>
<keyword id="KW-0479">Metal-binding</keyword>
<keyword id="KW-0547">Nucleotide-binding</keyword>
<keyword id="KW-0573">Peptidoglycan synthesis</keyword>
<keyword id="KW-1185">Reference proteome</keyword>
<dbReference type="EC" id="6.3.2.4" evidence="2"/>
<dbReference type="EMBL" id="AM260479">
    <property type="protein sequence ID" value="CAJ94345.1"/>
    <property type="molecule type" value="Genomic_DNA"/>
</dbReference>
<dbReference type="RefSeq" id="WP_011616088.1">
    <property type="nucleotide sequence ID" value="NC_008313.1"/>
</dbReference>
<dbReference type="SMR" id="Q0K6M6"/>
<dbReference type="STRING" id="381666.H16_A3271"/>
<dbReference type="KEGG" id="reh:H16_A3271"/>
<dbReference type="PATRIC" id="fig|381666.6.peg.3665"/>
<dbReference type="eggNOG" id="COG1181">
    <property type="taxonomic scope" value="Bacteria"/>
</dbReference>
<dbReference type="HOGENOM" id="CLU_039268_1_2_4"/>
<dbReference type="OrthoDB" id="9813261at2"/>
<dbReference type="UniPathway" id="UPA00219"/>
<dbReference type="Proteomes" id="UP000008210">
    <property type="component" value="Chromosome 1"/>
</dbReference>
<dbReference type="GO" id="GO:0005829">
    <property type="term" value="C:cytosol"/>
    <property type="evidence" value="ECO:0007669"/>
    <property type="project" value="TreeGrafter"/>
</dbReference>
<dbReference type="GO" id="GO:0005524">
    <property type="term" value="F:ATP binding"/>
    <property type="evidence" value="ECO:0007669"/>
    <property type="project" value="UniProtKB-KW"/>
</dbReference>
<dbReference type="GO" id="GO:0008716">
    <property type="term" value="F:D-alanine-D-alanine ligase activity"/>
    <property type="evidence" value="ECO:0007669"/>
    <property type="project" value="UniProtKB-UniRule"/>
</dbReference>
<dbReference type="GO" id="GO:0046872">
    <property type="term" value="F:metal ion binding"/>
    <property type="evidence" value="ECO:0007669"/>
    <property type="project" value="UniProtKB-KW"/>
</dbReference>
<dbReference type="GO" id="GO:0071555">
    <property type="term" value="P:cell wall organization"/>
    <property type="evidence" value="ECO:0007669"/>
    <property type="project" value="UniProtKB-KW"/>
</dbReference>
<dbReference type="GO" id="GO:0009252">
    <property type="term" value="P:peptidoglycan biosynthetic process"/>
    <property type="evidence" value="ECO:0007669"/>
    <property type="project" value="UniProtKB-UniRule"/>
</dbReference>
<dbReference type="GO" id="GO:0008360">
    <property type="term" value="P:regulation of cell shape"/>
    <property type="evidence" value="ECO:0007669"/>
    <property type="project" value="UniProtKB-KW"/>
</dbReference>
<dbReference type="FunFam" id="3.30.470.20:FF:000008">
    <property type="entry name" value="D-alanine--D-alanine ligase"/>
    <property type="match status" value="1"/>
</dbReference>
<dbReference type="FunFam" id="3.40.50.20:FF:000013">
    <property type="entry name" value="D-alanine--D-alanine ligase"/>
    <property type="match status" value="1"/>
</dbReference>
<dbReference type="Gene3D" id="3.40.50.20">
    <property type="match status" value="1"/>
</dbReference>
<dbReference type="Gene3D" id="3.30.1490.20">
    <property type="entry name" value="ATP-grasp fold, A domain"/>
    <property type="match status" value="1"/>
</dbReference>
<dbReference type="Gene3D" id="3.30.470.20">
    <property type="entry name" value="ATP-grasp fold, B domain"/>
    <property type="match status" value="1"/>
</dbReference>
<dbReference type="HAMAP" id="MF_00047">
    <property type="entry name" value="Dala_Dala_lig"/>
    <property type="match status" value="1"/>
</dbReference>
<dbReference type="InterPro" id="IPR011761">
    <property type="entry name" value="ATP-grasp"/>
</dbReference>
<dbReference type="InterPro" id="IPR013815">
    <property type="entry name" value="ATP_grasp_subdomain_1"/>
</dbReference>
<dbReference type="InterPro" id="IPR000291">
    <property type="entry name" value="D-Ala_lig_Van_CS"/>
</dbReference>
<dbReference type="InterPro" id="IPR005905">
    <property type="entry name" value="D_ala_D_ala"/>
</dbReference>
<dbReference type="InterPro" id="IPR011095">
    <property type="entry name" value="Dala_Dala_lig_C"/>
</dbReference>
<dbReference type="InterPro" id="IPR011127">
    <property type="entry name" value="Dala_Dala_lig_N"/>
</dbReference>
<dbReference type="InterPro" id="IPR016185">
    <property type="entry name" value="PreATP-grasp_dom_sf"/>
</dbReference>
<dbReference type="NCBIfam" id="TIGR01205">
    <property type="entry name" value="D_ala_D_alaTIGR"/>
    <property type="match status" value="1"/>
</dbReference>
<dbReference type="NCBIfam" id="NF002378">
    <property type="entry name" value="PRK01372.1"/>
    <property type="match status" value="1"/>
</dbReference>
<dbReference type="PANTHER" id="PTHR23132">
    <property type="entry name" value="D-ALANINE--D-ALANINE LIGASE"/>
    <property type="match status" value="1"/>
</dbReference>
<dbReference type="PANTHER" id="PTHR23132:SF23">
    <property type="entry name" value="D-ALANINE--D-ALANINE LIGASE B"/>
    <property type="match status" value="1"/>
</dbReference>
<dbReference type="Pfam" id="PF07478">
    <property type="entry name" value="Dala_Dala_lig_C"/>
    <property type="match status" value="1"/>
</dbReference>
<dbReference type="Pfam" id="PF01820">
    <property type="entry name" value="Dala_Dala_lig_N"/>
    <property type="match status" value="1"/>
</dbReference>
<dbReference type="PIRSF" id="PIRSF039102">
    <property type="entry name" value="Ddl/VanB"/>
    <property type="match status" value="1"/>
</dbReference>
<dbReference type="SUPFAM" id="SSF56059">
    <property type="entry name" value="Glutathione synthetase ATP-binding domain-like"/>
    <property type="match status" value="1"/>
</dbReference>
<dbReference type="SUPFAM" id="SSF52440">
    <property type="entry name" value="PreATP-grasp domain"/>
    <property type="match status" value="1"/>
</dbReference>
<dbReference type="PROSITE" id="PS50975">
    <property type="entry name" value="ATP_GRASP"/>
    <property type="match status" value="1"/>
</dbReference>
<dbReference type="PROSITE" id="PS00843">
    <property type="entry name" value="DALA_DALA_LIGASE_1"/>
    <property type="match status" value="1"/>
</dbReference>
<dbReference type="PROSITE" id="PS00844">
    <property type="entry name" value="DALA_DALA_LIGASE_2"/>
    <property type="match status" value="1"/>
</dbReference>
<gene>
    <name evidence="2" type="primary">ddl</name>
    <name type="ordered locus">H16_A3271</name>
</gene>
<organism>
    <name type="scientific">Cupriavidus necator (strain ATCC 17699 / DSM 428 / KCTC 22496 / NCIMB 10442 / H16 / Stanier 337)</name>
    <name type="common">Ralstonia eutropha</name>
    <dbReference type="NCBI Taxonomy" id="381666"/>
    <lineage>
        <taxon>Bacteria</taxon>
        <taxon>Pseudomonadati</taxon>
        <taxon>Pseudomonadota</taxon>
        <taxon>Betaproteobacteria</taxon>
        <taxon>Burkholderiales</taxon>
        <taxon>Burkholderiaceae</taxon>
        <taxon>Cupriavidus</taxon>
    </lineage>
</organism>
<reference key="1">
    <citation type="journal article" date="2006" name="Nat. Biotechnol.">
        <title>Genome sequence of the bioplastic-producing 'Knallgas' bacterium Ralstonia eutropha H16.</title>
        <authorList>
            <person name="Pohlmann A."/>
            <person name="Fricke W.F."/>
            <person name="Reinecke F."/>
            <person name="Kusian B."/>
            <person name="Liesegang H."/>
            <person name="Cramm R."/>
            <person name="Eitinger T."/>
            <person name="Ewering C."/>
            <person name="Poetter M."/>
            <person name="Schwartz E."/>
            <person name="Strittmatter A."/>
            <person name="Voss I."/>
            <person name="Gottschalk G."/>
            <person name="Steinbuechel A."/>
            <person name="Friedrich B."/>
            <person name="Bowien B."/>
        </authorList>
    </citation>
    <scope>NUCLEOTIDE SEQUENCE [LARGE SCALE GENOMIC DNA]</scope>
    <source>
        <strain>ATCC 17699 / DSM 428 / KCTC 22496 / NCIMB 10442 / H16 / Stanier 337</strain>
    </source>
</reference>
<evidence type="ECO:0000250" key="1"/>
<evidence type="ECO:0000255" key="2">
    <source>
        <dbReference type="HAMAP-Rule" id="MF_00047"/>
    </source>
</evidence>